<protein>
    <recommendedName>
        <fullName evidence="1">Phosphoheptose isomerase</fullName>
        <ecNumber evidence="1">5.3.1.28</ecNumber>
    </recommendedName>
    <alternativeName>
        <fullName evidence="1">Sedoheptulose 7-phosphate isomerase</fullName>
    </alternativeName>
</protein>
<reference key="1">
    <citation type="journal article" date="2009" name="J. Bacteriol.">
        <title>Complete genome sequence of Haemophilus parasuis SH0165.</title>
        <authorList>
            <person name="Yue M."/>
            <person name="Yang F."/>
            <person name="Yang J."/>
            <person name="Bei W."/>
            <person name="Cai X."/>
            <person name="Chen L."/>
            <person name="Dong J."/>
            <person name="Zhou R."/>
            <person name="Jin M."/>
            <person name="Jin Q."/>
            <person name="Chen H."/>
        </authorList>
    </citation>
    <scope>NUCLEOTIDE SEQUENCE [LARGE SCALE GENOMIC DNA]</scope>
    <source>
        <strain>SH0165</strain>
    </source>
</reference>
<evidence type="ECO:0000255" key="1">
    <source>
        <dbReference type="HAMAP-Rule" id="MF_00067"/>
    </source>
</evidence>
<comment type="function">
    <text evidence="1">Catalyzes the isomerization of sedoheptulose 7-phosphate in D-glycero-D-manno-heptose 7-phosphate.</text>
</comment>
<comment type="catalytic activity">
    <reaction evidence="1">
        <text>2 D-sedoheptulose 7-phosphate = D-glycero-alpha-D-manno-heptose 7-phosphate + D-glycero-beta-D-manno-heptose 7-phosphate</text>
        <dbReference type="Rhea" id="RHEA:27489"/>
        <dbReference type="ChEBI" id="CHEBI:57483"/>
        <dbReference type="ChEBI" id="CHEBI:60203"/>
        <dbReference type="ChEBI" id="CHEBI:60204"/>
        <dbReference type="EC" id="5.3.1.28"/>
    </reaction>
</comment>
<comment type="cofactor">
    <cofactor evidence="1">
        <name>Zn(2+)</name>
        <dbReference type="ChEBI" id="CHEBI:29105"/>
    </cofactor>
    <text evidence="1">Binds 1 zinc ion per subunit.</text>
</comment>
<comment type="pathway">
    <text evidence="1">Carbohydrate biosynthesis; D-glycero-D-manno-heptose 7-phosphate biosynthesis; D-glycero-alpha-D-manno-heptose 7-phosphate and D-glycero-beta-D-manno-heptose 7-phosphate from sedoheptulose 7-phosphate: step 1/1.</text>
</comment>
<comment type="subunit">
    <text evidence="1">Homotetramer.</text>
</comment>
<comment type="subcellular location">
    <subcellularLocation>
        <location evidence="1">Cytoplasm</location>
    </subcellularLocation>
</comment>
<comment type="miscellaneous">
    <text evidence="1">The reaction produces a racemic mixture of D-glycero-alpha-D-manno-heptose 7-phosphate and D-glycero-beta-D-manno-heptose 7-phosphate.</text>
</comment>
<comment type="similarity">
    <text evidence="1">Belongs to the SIS family. GmhA subfamily.</text>
</comment>
<name>GMHA_GLAP5</name>
<dbReference type="EC" id="5.3.1.28" evidence="1"/>
<dbReference type="EMBL" id="CP001321">
    <property type="protein sequence ID" value="ACL31835.1"/>
    <property type="molecule type" value="Genomic_DNA"/>
</dbReference>
<dbReference type="SMR" id="B8F3D3"/>
<dbReference type="STRING" id="557723.HAPS_0137"/>
<dbReference type="KEGG" id="hap:HAPS_0137"/>
<dbReference type="HOGENOM" id="CLU_080999_4_0_6"/>
<dbReference type="UniPathway" id="UPA00041">
    <property type="reaction ID" value="UER00436"/>
</dbReference>
<dbReference type="Proteomes" id="UP000006743">
    <property type="component" value="Chromosome"/>
</dbReference>
<dbReference type="GO" id="GO:0005737">
    <property type="term" value="C:cytoplasm"/>
    <property type="evidence" value="ECO:0007669"/>
    <property type="project" value="UniProtKB-SubCell"/>
</dbReference>
<dbReference type="GO" id="GO:0097367">
    <property type="term" value="F:carbohydrate derivative binding"/>
    <property type="evidence" value="ECO:0007669"/>
    <property type="project" value="InterPro"/>
</dbReference>
<dbReference type="GO" id="GO:0008968">
    <property type="term" value="F:D-sedoheptulose 7-phosphate isomerase activity"/>
    <property type="evidence" value="ECO:0007669"/>
    <property type="project" value="UniProtKB-UniRule"/>
</dbReference>
<dbReference type="GO" id="GO:0008270">
    <property type="term" value="F:zinc ion binding"/>
    <property type="evidence" value="ECO:0007669"/>
    <property type="project" value="UniProtKB-UniRule"/>
</dbReference>
<dbReference type="GO" id="GO:0005975">
    <property type="term" value="P:carbohydrate metabolic process"/>
    <property type="evidence" value="ECO:0007669"/>
    <property type="project" value="UniProtKB-UniRule"/>
</dbReference>
<dbReference type="GO" id="GO:2001061">
    <property type="term" value="P:D-glycero-D-manno-heptose 7-phosphate biosynthetic process"/>
    <property type="evidence" value="ECO:0007669"/>
    <property type="project" value="UniProtKB-UniPathway"/>
</dbReference>
<dbReference type="CDD" id="cd05006">
    <property type="entry name" value="SIS_GmhA"/>
    <property type="match status" value="1"/>
</dbReference>
<dbReference type="Gene3D" id="3.40.50.10490">
    <property type="entry name" value="Glucose-6-phosphate isomerase like protein, domain 1"/>
    <property type="match status" value="1"/>
</dbReference>
<dbReference type="HAMAP" id="MF_00067">
    <property type="entry name" value="GmhA"/>
    <property type="match status" value="1"/>
</dbReference>
<dbReference type="InterPro" id="IPR035461">
    <property type="entry name" value="GmhA/DiaA"/>
</dbReference>
<dbReference type="InterPro" id="IPR004515">
    <property type="entry name" value="Phosphoheptose_Isoase"/>
</dbReference>
<dbReference type="InterPro" id="IPR001347">
    <property type="entry name" value="SIS_dom"/>
</dbReference>
<dbReference type="InterPro" id="IPR046348">
    <property type="entry name" value="SIS_dom_sf"/>
</dbReference>
<dbReference type="InterPro" id="IPR050099">
    <property type="entry name" value="SIS_GmhA/DiaA_subfam"/>
</dbReference>
<dbReference type="NCBIfam" id="TIGR00441">
    <property type="entry name" value="gmhA"/>
    <property type="match status" value="1"/>
</dbReference>
<dbReference type="NCBIfam" id="NF001628">
    <property type="entry name" value="PRK00414.1"/>
    <property type="match status" value="1"/>
</dbReference>
<dbReference type="PANTHER" id="PTHR30390:SF7">
    <property type="entry name" value="PHOSPHOHEPTOSE ISOMERASE"/>
    <property type="match status" value="1"/>
</dbReference>
<dbReference type="PANTHER" id="PTHR30390">
    <property type="entry name" value="SEDOHEPTULOSE 7-PHOSPHATE ISOMERASE / DNAA INITIATOR-ASSOCIATING FACTOR FOR REPLICATION INITIATION"/>
    <property type="match status" value="1"/>
</dbReference>
<dbReference type="Pfam" id="PF13580">
    <property type="entry name" value="SIS_2"/>
    <property type="match status" value="1"/>
</dbReference>
<dbReference type="SUPFAM" id="SSF53697">
    <property type="entry name" value="SIS domain"/>
    <property type="match status" value="1"/>
</dbReference>
<dbReference type="PROSITE" id="PS51464">
    <property type="entry name" value="SIS"/>
    <property type="match status" value="1"/>
</dbReference>
<gene>
    <name evidence="1" type="primary">gmhA</name>
    <name type="ordered locus">HAPS_0137</name>
</gene>
<feature type="chain" id="PRO_1000197007" description="Phosphoheptose isomerase">
    <location>
        <begin position="1"/>
        <end position="192"/>
    </location>
</feature>
<feature type="domain" description="SIS" evidence="1">
    <location>
        <begin position="37"/>
        <end position="192"/>
    </location>
</feature>
<feature type="binding site" evidence="1">
    <location>
        <begin position="52"/>
        <end position="54"/>
    </location>
    <ligand>
        <name>substrate</name>
    </ligand>
</feature>
<feature type="binding site" evidence="1">
    <location>
        <position position="61"/>
    </location>
    <ligand>
        <name>Zn(2+)</name>
        <dbReference type="ChEBI" id="CHEBI:29105"/>
    </ligand>
</feature>
<feature type="binding site" evidence="1">
    <location>
        <position position="65"/>
    </location>
    <ligand>
        <name>substrate</name>
    </ligand>
</feature>
<feature type="binding site" evidence="1">
    <location>
        <position position="65"/>
    </location>
    <ligand>
        <name>Zn(2+)</name>
        <dbReference type="ChEBI" id="CHEBI:29105"/>
    </ligand>
</feature>
<feature type="binding site" evidence="1">
    <location>
        <begin position="93"/>
        <end position="94"/>
    </location>
    <ligand>
        <name>substrate</name>
    </ligand>
</feature>
<feature type="binding site" evidence="1">
    <location>
        <begin position="119"/>
        <end position="121"/>
    </location>
    <ligand>
        <name>substrate</name>
    </ligand>
</feature>
<feature type="binding site" evidence="1">
    <location>
        <position position="124"/>
    </location>
    <ligand>
        <name>substrate</name>
    </ligand>
</feature>
<feature type="binding site" evidence="1">
    <location>
        <position position="172"/>
    </location>
    <ligand>
        <name>substrate</name>
    </ligand>
</feature>
<feature type="binding site" evidence="1">
    <location>
        <position position="172"/>
    </location>
    <ligand>
        <name>Zn(2+)</name>
        <dbReference type="ChEBI" id="CHEBI:29105"/>
    </ligand>
</feature>
<feature type="binding site" evidence="1">
    <location>
        <position position="180"/>
    </location>
    <ligand>
        <name>Zn(2+)</name>
        <dbReference type="ChEBI" id="CHEBI:29105"/>
    </ligand>
</feature>
<keyword id="KW-0119">Carbohydrate metabolism</keyword>
<keyword id="KW-0963">Cytoplasm</keyword>
<keyword id="KW-0413">Isomerase</keyword>
<keyword id="KW-0479">Metal-binding</keyword>
<keyword id="KW-1185">Reference proteome</keyword>
<keyword id="KW-0862">Zinc</keyword>
<accession>B8F3D3</accession>
<sequence>MYQQQILIELQEAQQVLNDFINDQHNLKLIQEAALLITDSFKNGGKILSCGNGGSHCDAMHFAEELTGRYRENRPGYPAIAISDPSHLSCVSNDFGYEYVFSRYVEAIGQKGDILFCLSTSGNSKNVINAIIAAKAKGMKIIAMTGKDGGKIAELADIEIRVPHFRYADRIQEIHIKVIHILMMLIEFEMAK</sequence>
<organism>
    <name type="scientific">Glaesserella parasuis serovar 5 (strain SH0165)</name>
    <name type="common">Haemophilus parasuis</name>
    <dbReference type="NCBI Taxonomy" id="557723"/>
    <lineage>
        <taxon>Bacteria</taxon>
        <taxon>Pseudomonadati</taxon>
        <taxon>Pseudomonadota</taxon>
        <taxon>Gammaproteobacteria</taxon>
        <taxon>Pasteurellales</taxon>
        <taxon>Pasteurellaceae</taxon>
        <taxon>Glaesserella</taxon>
    </lineage>
</organism>
<proteinExistence type="inferred from homology"/>